<sequence length="207" mass="24037">MFLSLLILLSYALGFVFCVVCLACGLYYFSELVEEHATVAKRWIKYTMWFVMGIIFLLGIFEDLDFTSLLFSFIGHCCYYTLLTEFPFVTLTGYKFILSVLSFIISHISWFIYFRNTENWYPFGEIIAIFTFCVWLIPLIFFISLAANDNSLPMANSYSSHSNSNIIGVDSEFTKKKSRISVLKSMFAWAKEKTSDITGQKSMKHYY</sequence>
<keyword id="KW-0472">Membrane</keyword>
<keyword id="KW-1185">Reference proteome</keyword>
<keyword id="KW-0812">Transmembrane</keyword>
<keyword id="KW-1133">Transmembrane helix</keyword>
<gene>
    <name type="ORF">DDB_G0291374</name>
</gene>
<protein>
    <recommendedName>
        <fullName>Protein TEX261 homolog</fullName>
    </recommendedName>
</protein>
<comment type="subcellular location">
    <subcellularLocation>
        <location evidence="2">Membrane</location>
        <topology evidence="2">Multi-pass membrane protein</topology>
    </subcellularLocation>
</comment>
<comment type="similarity">
    <text evidence="2">Belongs to the SVP26 family.</text>
</comment>
<name>TX261_DICDI</name>
<accession>Q54ER8</accession>
<evidence type="ECO:0000255" key="1"/>
<evidence type="ECO:0000305" key="2"/>
<feature type="chain" id="PRO_0000327766" description="Protein TEX261 homolog">
    <location>
        <begin position="1"/>
        <end position="207"/>
    </location>
</feature>
<feature type="transmembrane region" description="Helical" evidence="1">
    <location>
        <begin position="2"/>
        <end position="22"/>
    </location>
</feature>
<feature type="transmembrane region" description="Helical" evidence="1">
    <location>
        <begin position="54"/>
        <end position="74"/>
    </location>
</feature>
<feature type="transmembrane region" description="Helical" evidence="1">
    <location>
        <begin position="94"/>
        <end position="114"/>
    </location>
</feature>
<feature type="transmembrane region" description="Helical" evidence="1">
    <location>
        <begin position="126"/>
        <end position="146"/>
    </location>
</feature>
<proteinExistence type="inferred from homology"/>
<reference key="1">
    <citation type="journal article" date="2005" name="Nature">
        <title>The genome of the social amoeba Dictyostelium discoideum.</title>
        <authorList>
            <person name="Eichinger L."/>
            <person name="Pachebat J.A."/>
            <person name="Gloeckner G."/>
            <person name="Rajandream M.A."/>
            <person name="Sucgang R."/>
            <person name="Berriman M."/>
            <person name="Song J."/>
            <person name="Olsen R."/>
            <person name="Szafranski K."/>
            <person name="Xu Q."/>
            <person name="Tunggal B."/>
            <person name="Kummerfeld S."/>
            <person name="Madera M."/>
            <person name="Konfortov B.A."/>
            <person name="Rivero F."/>
            <person name="Bankier A.T."/>
            <person name="Lehmann R."/>
            <person name="Hamlin N."/>
            <person name="Davies R."/>
            <person name="Gaudet P."/>
            <person name="Fey P."/>
            <person name="Pilcher K."/>
            <person name="Chen G."/>
            <person name="Saunders D."/>
            <person name="Sodergren E.J."/>
            <person name="Davis P."/>
            <person name="Kerhornou A."/>
            <person name="Nie X."/>
            <person name="Hall N."/>
            <person name="Anjard C."/>
            <person name="Hemphill L."/>
            <person name="Bason N."/>
            <person name="Farbrother P."/>
            <person name="Desany B."/>
            <person name="Just E."/>
            <person name="Morio T."/>
            <person name="Rost R."/>
            <person name="Churcher C.M."/>
            <person name="Cooper J."/>
            <person name="Haydock S."/>
            <person name="van Driessche N."/>
            <person name="Cronin A."/>
            <person name="Goodhead I."/>
            <person name="Muzny D.M."/>
            <person name="Mourier T."/>
            <person name="Pain A."/>
            <person name="Lu M."/>
            <person name="Harper D."/>
            <person name="Lindsay R."/>
            <person name="Hauser H."/>
            <person name="James K.D."/>
            <person name="Quiles M."/>
            <person name="Madan Babu M."/>
            <person name="Saito T."/>
            <person name="Buchrieser C."/>
            <person name="Wardroper A."/>
            <person name="Felder M."/>
            <person name="Thangavelu M."/>
            <person name="Johnson D."/>
            <person name="Knights A."/>
            <person name="Loulseged H."/>
            <person name="Mungall K.L."/>
            <person name="Oliver K."/>
            <person name="Price C."/>
            <person name="Quail M.A."/>
            <person name="Urushihara H."/>
            <person name="Hernandez J."/>
            <person name="Rabbinowitsch E."/>
            <person name="Steffen D."/>
            <person name="Sanders M."/>
            <person name="Ma J."/>
            <person name="Kohara Y."/>
            <person name="Sharp S."/>
            <person name="Simmonds M.N."/>
            <person name="Spiegler S."/>
            <person name="Tivey A."/>
            <person name="Sugano S."/>
            <person name="White B."/>
            <person name="Walker D."/>
            <person name="Woodward J.R."/>
            <person name="Winckler T."/>
            <person name="Tanaka Y."/>
            <person name="Shaulsky G."/>
            <person name="Schleicher M."/>
            <person name="Weinstock G.M."/>
            <person name="Rosenthal A."/>
            <person name="Cox E.C."/>
            <person name="Chisholm R.L."/>
            <person name="Gibbs R.A."/>
            <person name="Loomis W.F."/>
            <person name="Platzer M."/>
            <person name="Kay R.R."/>
            <person name="Williams J.G."/>
            <person name="Dear P.H."/>
            <person name="Noegel A.A."/>
            <person name="Barrell B.G."/>
            <person name="Kuspa A."/>
        </authorList>
    </citation>
    <scope>NUCLEOTIDE SEQUENCE [LARGE SCALE GENOMIC DNA]</scope>
    <source>
        <strain>AX4</strain>
    </source>
</reference>
<dbReference type="EMBL" id="AAFI02000177">
    <property type="protein sequence ID" value="EAL61671.1"/>
    <property type="molecule type" value="Genomic_DNA"/>
</dbReference>
<dbReference type="RefSeq" id="XP_635172.1">
    <property type="nucleotide sequence ID" value="XM_630080.1"/>
</dbReference>
<dbReference type="SMR" id="Q54ER8"/>
<dbReference type="FunCoup" id="Q54ER8">
    <property type="interactions" value="104"/>
</dbReference>
<dbReference type="PaxDb" id="44689-DDB0266491"/>
<dbReference type="EnsemblProtists" id="EAL61671">
    <property type="protein sequence ID" value="EAL61671"/>
    <property type="gene ID" value="DDB_G0291374"/>
</dbReference>
<dbReference type="GeneID" id="8628118"/>
<dbReference type="KEGG" id="ddi:DDB_G0291374"/>
<dbReference type="dictyBase" id="DDB_G0291374"/>
<dbReference type="VEuPathDB" id="AmoebaDB:DDB_G0291374"/>
<dbReference type="eggNOG" id="KOG4136">
    <property type="taxonomic scope" value="Eukaryota"/>
</dbReference>
<dbReference type="HOGENOM" id="CLU_058268_2_0_1"/>
<dbReference type="InParanoid" id="Q54ER8"/>
<dbReference type="OMA" id="TMGTEPV"/>
<dbReference type="PhylomeDB" id="Q54ER8"/>
<dbReference type="PRO" id="PR:Q54ER8"/>
<dbReference type="Proteomes" id="UP000002195">
    <property type="component" value="Chromosome 6"/>
</dbReference>
<dbReference type="GO" id="GO:0030134">
    <property type="term" value="C:COPII-coated ER to Golgi transport vesicle"/>
    <property type="evidence" value="ECO:0000318"/>
    <property type="project" value="GO_Central"/>
</dbReference>
<dbReference type="GO" id="GO:0005789">
    <property type="term" value="C:endoplasmic reticulum membrane"/>
    <property type="evidence" value="ECO:0000318"/>
    <property type="project" value="GO_Central"/>
</dbReference>
<dbReference type="GO" id="GO:0000139">
    <property type="term" value="C:Golgi membrane"/>
    <property type="evidence" value="ECO:0000318"/>
    <property type="project" value="GO_Central"/>
</dbReference>
<dbReference type="GO" id="GO:0097020">
    <property type="term" value="F:COPII receptor activity"/>
    <property type="evidence" value="ECO:0000318"/>
    <property type="project" value="GO_Central"/>
</dbReference>
<dbReference type="GO" id="GO:0006888">
    <property type="term" value="P:endoplasmic reticulum to Golgi vesicle-mediated transport"/>
    <property type="evidence" value="ECO:0000318"/>
    <property type="project" value="GO_Central"/>
</dbReference>
<dbReference type="InterPro" id="IPR007277">
    <property type="entry name" value="Svp26/Tex261"/>
</dbReference>
<dbReference type="PANTHER" id="PTHR13144:SF0">
    <property type="entry name" value="PROTEIN TEX261"/>
    <property type="match status" value="1"/>
</dbReference>
<dbReference type="PANTHER" id="PTHR13144">
    <property type="entry name" value="TEX261 PROTEIN"/>
    <property type="match status" value="1"/>
</dbReference>
<dbReference type="Pfam" id="PF04148">
    <property type="entry name" value="Erv26"/>
    <property type="match status" value="1"/>
</dbReference>
<organism>
    <name type="scientific">Dictyostelium discoideum</name>
    <name type="common">Social amoeba</name>
    <dbReference type="NCBI Taxonomy" id="44689"/>
    <lineage>
        <taxon>Eukaryota</taxon>
        <taxon>Amoebozoa</taxon>
        <taxon>Evosea</taxon>
        <taxon>Eumycetozoa</taxon>
        <taxon>Dictyostelia</taxon>
        <taxon>Dictyosteliales</taxon>
        <taxon>Dictyosteliaceae</taxon>
        <taxon>Dictyostelium</taxon>
    </lineage>
</organism>